<organism>
    <name type="scientific">Escherichia coli (strain SMS-3-5 / SECEC)</name>
    <dbReference type="NCBI Taxonomy" id="439855"/>
    <lineage>
        <taxon>Bacteria</taxon>
        <taxon>Pseudomonadati</taxon>
        <taxon>Pseudomonadota</taxon>
        <taxon>Gammaproteobacteria</taxon>
        <taxon>Enterobacterales</taxon>
        <taxon>Enterobacteriaceae</taxon>
        <taxon>Escherichia</taxon>
    </lineage>
</organism>
<protein>
    <recommendedName>
        <fullName evidence="1">1-(5-phosphoribosyl)-5-[(5-phosphoribosylamino)methylideneamino] imidazole-4-carboxamide isomerase</fullName>
        <ecNumber evidence="1">5.3.1.16</ecNumber>
    </recommendedName>
    <alternativeName>
        <fullName evidence="1">Phosphoribosylformimino-5-aminoimidazole carboxamide ribotide isomerase</fullName>
    </alternativeName>
</protein>
<reference key="1">
    <citation type="journal article" date="2008" name="J. Bacteriol.">
        <title>Insights into the environmental resistance gene pool from the genome sequence of the multidrug-resistant environmental isolate Escherichia coli SMS-3-5.</title>
        <authorList>
            <person name="Fricke W.F."/>
            <person name="Wright M.S."/>
            <person name="Lindell A.H."/>
            <person name="Harkins D.M."/>
            <person name="Baker-Austin C."/>
            <person name="Ravel J."/>
            <person name="Stepanauskas R."/>
        </authorList>
    </citation>
    <scope>NUCLEOTIDE SEQUENCE [LARGE SCALE GENOMIC DNA]</scope>
    <source>
        <strain>SMS-3-5 / SECEC</strain>
    </source>
</reference>
<proteinExistence type="inferred from homology"/>
<comment type="catalytic activity">
    <reaction evidence="1">
        <text>1-(5-phospho-beta-D-ribosyl)-5-[(5-phospho-beta-D-ribosylamino)methylideneamino]imidazole-4-carboxamide = 5-[(5-phospho-1-deoxy-D-ribulos-1-ylimino)methylamino]-1-(5-phospho-beta-D-ribosyl)imidazole-4-carboxamide</text>
        <dbReference type="Rhea" id="RHEA:15469"/>
        <dbReference type="ChEBI" id="CHEBI:58435"/>
        <dbReference type="ChEBI" id="CHEBI:58525"/>
        <dbReference type="EC" id="5.3.1.16"/>
    </reaction>
</comment>
<comment type="pathway">
    <text evidence="1">Amino-acid biosynthesis; L-histidine biosynthesis; L-histidine from 5-phospho-alpha-D-ribose 1-diphosphate: step 4/9.</text>
</comment>
<comment type="subcellular location">
    <subcellularLocation>
        <location evidence="1">Cytoplasm</location>
    </subcellularLocation>
</comment>
<comment type="similarity">
    <text evidence="1">Belongs to the HisA/HisF family.</text>
</comment>
<keyword id="KW-0028">Amino-acid biosynthesis</keyword>
<keyword id="KW-0963">Cytoplasm</keyword>
<keyword id="KW-0368">Histidine biosynthesis</keyword>
<keyword id="KW-0413">Isomerase</keyword>
<feature type="chain" id="PRO_1000135115" description="1-(5-phosphoribosyl)-5-[(5-phosphoribosylamino)methylideneamino] imidazole-4-carboxamide isomerase">
    <location>
        <begin position="1"/>
        <end position="245"/>
    </location>
</feature>
<feature type="active site" description="Proton acceptor" evidence="1">
    <location>
        <position position="7"/>
    </location>
</feature>
<feature type="active site" description="Proton donor" evidence="1">
    <location>
        <position position="129"/>
    </location>
</feature>
<accession>B1LP17</accession>
<dbReference type="EC" id="5.3.1.16" evidence="1"/>
<dbReference type="EMBL" id="CP000970">
    <property type="protein sequence ID" value="ACB16114.1"/>
    <property type="molecule type" value="Genomic_DNA"/>
</dbReference>
<dbReference type="RefSeq" id="WP_000586459.1">
    <property type="nucleotide sequence ID" value="NC_010498.1"/>
</dbReference>
<dbReference type="SMR" id="B1LP17"/>
<dbReference type="GeneID" id="93775149"/>
<dbReference type="KEGG" id="ecm:EcSMS35_1036"/>
<dbReference type="HOGENOM" id="CLU_048577_1_2_6"/>
<dbReference type="UniPathway" id="UPA00031">
    <property type="reaction ID" value="UER00009"/>
</dbReference>
<dbReference type="Proteomes" id="UP000007011">
    <property type="component" value="Chromosome"/>
</dbReference>
<dbReference type="GO" id="GO:0005737">
    <property type="term" value="C:cytoplasm"/>
    <property type="evidence" value="ECO:0007669"/>
    <property type="project" value="UniProtKB-SubCell"/>
</dbReference>
<dbReference type="GO" id="GO:0003949">
    <property type="term" value="F:1-(5-phosphoribosyl)-5-[(5-phosphoribosylamino)methylideneamino]imidazole-4-carboxamide isomerase activity"/>
    <property type="evidence" value="ECO:0007669"/>
    <property type="project" value="UniProtKB-UniRule"/>
</dbReference>
<dbReference type="GO" id="GO:0000105">
    <property type="term" value="P:L-histidine biosynthetic process"/>
    <property type="evidence" value="ECO:0007669"/>
    <property type="project" value="UniProtKB-UniRule"/>
</dbReference>
<dbReference type="GO" id="GO:0000162">
    <property type="term" value="P:L-tryptophan biosynthetic process"/>
    <property type="evidence" value="ECO:0007669"/>
    <property type="project" value="TreeGrafter"/>
</dbReference>
<dbReference type="CDD" id="cd04732">
    <property type="entry name" value="HisA"/>
    <property type="match status" value="1"/>
</dbReference>
<dbReference type="FunFam" id="3.20.20.70:FF:000009">
    <property type="entry name" value="1-(5-phosphoribosyl)-5-[(5-phosphoribosylamino)methylideneamino] imidazole-4-carboxamide isomerase"/>
    <property type="match status" value="1"/>
</dbReference>
<dbReference type="Gene3D" id="3.20.20.70">
    <property type="entry name" value="Aldolase class I"/>
    <property type="match status" value="1"/>
</dbReference>
<dbReference type="HAMAP" id="MF_01014">
    <property type="entry name" value="HisA"/>
    <property type="match status" value="1"/>
</dbReference>
<dbReference type="InterPro" id="IPR013785">
    <property type="entry name" value="Aldolase_TIM"/>
</dbReference>
<dbReference type="InterPro" id="IPR006062">
    <property type="entry name" value="His_biosynth"/>
</dbReference>
<dbReference type="InterPro" id="IPR006063">
    <property type="entry name" value="HisA_bact_arch"/>
</dbReference>
<dbReference type="InterPro" id="IPR044524">
    <property type="entry name" value="Isoase_HisA-like"/>
</dbReference>
<dbReference type="InterPro" id="IPR023016">
    <property type="entry name" value="Isoase_HisA-like_bact"/>
</dbReference>
<dbReference type="InterPro" id="IPR011060">
    <property type="entry name" value="RibuloseP-bd_barrel"/>
</dbReference>
<dbReference type="NCBIfam" id="TIGR00007">
    <property type="entry name" value="1-(5-phosphoribosyl)-5-[(5-phosphoribosylamino)methylideneamino]imidazole-4-carboxamide isomerase"/>
    <property type="match status" value="1"/>
</dbReference>
<dbReference type="PANTHER" id="PTHR43090">
    <property type="entry name" value="1-(5-PHOSPHORIBOSYL)-5-[(5-PHOSPHORIBOSYLAMINO)METHYLIDENEAMINO] IMIDAZOLE-4-CARBOXAMIDE ISOMERASE"/>
    <property type="match status" value="1"/>
</dbReference>
<dbReference type="PANTHER" id="PTHR43090:SF2">
    <property type="entry name" value="1-(5-PHOSPHORIBOSYL)-5-[(5-PHOSPHORIBOSYLAMINO)METHYLIDENEAMINO] IMIDAZOLE-4-CARBOXAMIDE ISOMERASE"/>
    <property type="match status" value="1"/>
</dbReference>
<dbReference type="Pfam" id="PF00977">
    <property type="entry name" value="His_biosynth"/>
    <property type="match status" value="1"/>
</dbReference>
<dbReference type="SUPFAM" id="SSF51366">
    <property type="entry name" value="Ribulose-phoshate binding barrel"/>
    <property type="match status" value="1"/>
</dbReference>
<evidence type="ECO:0000255" key="1">
    <source>
        <dbReference type="HAMAP-Rule" id="MF_01014"/>
    </source>
</evidence>
<gene>
    <name evidence="1" type="primary">hisA</name>
    <name type="ordered locus">EcSMS35_1036</name>
</gene>
<sequence>MIIPALDLIDGTVVRLHQGDYGKQRDYGNDPLPRLQDYAAQGAEVLHLVDLTGAKDPAKRQIPLIKTLVAGVNVPVQVGGGVRSEEDVAALLEAGVARVVVGSTAVKSPERVKGWFERFGADALVLALDVRIDEQGNKQVAVSGWQENSGVSLEQLVETYLPVGLKHVLCTDISRDGTLAGSNVSLYEEVCARYPQVAFQSSGGIGDINDVAALRGTGVRGVIVGRALLEGKFTVKEAIACWQNA</sequence>
<name>HIS4_ECOSM</name>